<organism>
    <name type="scientific">Schizosaccharomyces pombe (strain 972 / ATCC 24843)</name>
    <name type="common">Fission yeast</name>
    <dbReference type="NCBI Taxonomy" id="284812"/>
    <lineage>
        <taxon>Eukaryota</taxon>
        <taxon>Fungi</taxon>
        <taxon>Dikarya</taxon>
        <taxon>Ascomycota</taxon>
        <taxon>Taphrinomycotina</taxon>
        <taxon>Schizosaccharomycetes</taxon>
        <taxon>Schizosaccharomycetales</taxon>
        <taxon>Schizosaccharomycetaceae</taxon>
        <taxon>Schizosaccharomyces</taxon>
    </lineage>
</organism>
<feature type="chain" id="PRO_0000316031" description="2-hydroxyacid dehydrogenase homolog 2">
    <location>
        <begin position="1"/>
        <end position="332"/>
    </location>
</feature>
<feature type="active site" evidence="1">
    <location>
        <position position="235"/>
    </location>
</feature>
<feature type="active site" evidence="1">
    <location>
        <position position="264"/>
    </location>
</feature>
<feature type="active site" description="Proton donor" evidence="1">
    <location>
        <position position="296"/>
    </location>
</feature>
<feature type="binding site" evidence="1">
    <location>
        <begin position="154"/>
        <end position="155"/>
    </location>
    <ligand>
        <name>NAD(+)</name>
        <dbReference type="ChEBI" id="CHEBI:57540"/>
    </ligand>
</feature>
<feature type="binding site" evidence="1">
    <location>
        <begin position="233"/>
        <end position="235"/>
    </location>
    <ligand>
        <name>NAD(+)</name>
        <dbReference type="ChEBI" id="CHEBI:57540"/>
    </ligand>
</feature>
<feature type="binding site" evidence="1">
    <location>
        <position position="259"/>
    </location>
    <ligand>
        <name>NAD(+)</name>
        <dbReference type="ChEBI" id="CHEBI:57540"/>
    </ligand>
</feature>
<feature type="binding site" evidence="1">
    <location>
        <begin position="296"/>
        <end position="299"/>
    </location>
    <ligand>
        <name>NAD(+)</name>
        <dbReference type="ChEBI" id="CHEBI:57540"/>
    </ligand>
</feature>
<dbReference type="EC" id="1.1.1.-"/>
<dbReference type="EMBL" id="CU329670">
    <property type="protein sequence ID" value="CAB75866.1"/>
    <property type="molecule type" value="Genomic_DNA"/>
</dbReference>
<dbReference type="PIR" id="T50129">
    <property type="entry name" value="T50129"/>
</dbReference>
<dbReference type="RefSeq" id="NP_595020.1">
    <property type="nucleotide sequence ID" value="NM_001020451.2"/>
</dbReference>
<dbReference type="SMR" id="Q9P7Q1"/>
<dbReference type="FunCoup" id="Q9P7Q1">
    <property type="interactions" value="26"/>
</dbReference>
<dbReference type="STRING" id="284812.Q9P7Q1"/>
<dbReference type="PaxDb" id="4896-SPAC186.02c.1"/>
<dbReference type="EnsemblFungi" id="SPAC186.02c.1">
    <property type="protein sequence ID" value="SPAC186.02c.1:pep"/>
    <property type="gene ID" value="SPAC186.02c"/>
</dbReference>
<dbReference type="KEGG" id="spo:2542495"/>
<dbReference type="PomBase" id="SPAC186.02c"/>
<dbReference type="VEuPathDB" id="FungiDB:SPAC186.02c"/>
<dbReference type="eggNOG" id="KOG0068">
    <property type="taxonomic scope" value="Eukaryota"/>
</dbReference>
<dbReference type="HOGENOM" id="CLU_019796_1_1_1"/>
<dbReference type="InParanoid" id="Q9P7Q1"/>
<dbReference type="PhylomeDB" id="Q9P7Q1"/>
<dbReference type="PRO" id="PR:Q9P7Q1"/>
<dbReference type="Proteomes" id="UP000002485">
    <property type="component" value="Chromosome I"/>
</dbReference>
<dbReference type="GO" id="GO:0005829">
    <property type="term" value="C:cytosol"/>
    <property type="evidence" value="ECO:0007005"/>
    <property type="project" value="PomBase"/>
</dbReference>
<dbReference type="GO" id="GO:0005634">
    <property type="term" value="C:nucleus"/>
    <property type="evidence" value="ECO:0007005"/>
    <property type="project" value="PomBase"/>
</dbReference>
<dbReference type="GO" id="GO:0051287">
    <property type="term" value="F:NAD binding"/>
    <property type="evidence" value="ECO:0007669"/>
    <property type="project" value="InterPro"/>
</dbReference>
<dbReference type="GO" id="GO:0016616">
    <property type="term" value="F:oxidoreductase activity, acting on the CH-OH group of donors, NAD or NADP as acceptor"/>
    <property type="evidence" value="ECO:0007669"/>
    <property type="project" value="InterPro"/>
</dbReference>
<dbReference type="CDD" id="cd12183">
    <property type="entry name" value="LDH_like_2"/>
    <property type="match status" value="1"/>
</dbReference>
<dbReference type="FunFam" id="3.40.50.720:FF:000292">
    <property type="entry name" value="Putative D-lactate dehydrogenase"/>
    <property type="match status" value="1"/>
</dbReference>
<dbReference type="Gene3D" id="3.40.50.720">
    <property type="entry name" value="NAD(P)-binding Rossmann-like Domain"/>
    <property type="match status" value="2"/>
</dbReference>
<dbReference type="InterPro" id="IPR006139">
    <property type="entry name" value="D-isomer_2_OHA_DH_cat_dom"/>
</dbReference>
<dbReference type="InterPro" id="IPR029753">
    <property type="entry name" value="D-isomer_DH_CS"/>
</dbReference>
<dbReference type="InterPro" id="IPR029752">
    <property type="entry name" value="D-isomer_DH_CS1"/>
</dbReference>
<dbReference type="InterPro" id="IPR006140">
    <property type="entry name" value="D-isomer_DH_NAD-bd"/>
</dbReference>
<dbReference type="InterPro" id="IPR036291">
    <property type="entry name" value="NAD(P)-bd_dom_sf"/>
</dbReference>
<dbReference type="PANTHER" id="PTHR43026">
    <property type="entry name" value="2-HYDROXYACID DEHYDROGENASE HOMOLOG 1-RELATED"/>
    <property type="match status" value="1"/>
</dbReference>
<dbReference type="PANTHER" id="PTHR43026:SF1">
    <property type="entry name" value="2-HYDROXYACID DEHYDROGENASE HOMOLOG 1-RELATED"/>
    <property type="match status" value="1"/>
</dbReference>
<dbReference type="Pfam" id="PF00389">
    <property type="entry name" value="2-Hacid_dh"/>
    <property type="match status" value="1"/>
</dbReference>
<dbReference type="Pfam" id="PF02826">
    <property type="entry name" value="2-Hacid_dh_C"/>
    <property type="match status" value="1"/>
</dbReference>
<dbReference type="SUPFAM" id="SSF52283">
    <property type="entry name" value="Formate/glycerate dehydrogenase catalytic domain-like"/>
    <property type="match status" value="1"/>
</dbReference>
<dbReference type="SUPFAM" id="SSF51735">
    <property type="entry name" value="NAD(P)-binding Rossmann-fold domains"/>
    <property type="match status" value="1"/>
</dbReference>
<dbReference type="PROSITE" id="PS00065">
    <property type="entry name" value="D_2_HYDROXYACID_DH_1"/>
    <property type="match status" value="1"/>
</dbReference>
<dbReference type="PROSITE" id="PS00670">
    <property type="entry name" value="D_2_HYDROXYACID_DH_2"/>
    <property type="match status" value="1"/>
</dbReference>
<evidence type="ECO:0000250" key="1"/>
<evidence type="ECO:0000305" key="2"/>
<sequence length="332" mass="36369">MRVVLFSSQSYDRGPFEEANKTFNHEIIYHNFSLNKDTVSLAGKAQVVCVFVNDQVDADTLKALAENGVKLVALRCGGYNNVNLKAASEYKITVVHVPSYSPFAVSEFTVGLLLSLNRKIHRAYVRVREDDFNIVGLLGCDIHGKTVGVIGTGKIGSNVAKCFKMGFGCDVLAYDINPDKKLENYGVQFVEQNEVLKKADFLCLHCPLTPSTTHIVNSDSLALMKKGVTIVNTSRGGLIDTKALVDAIDSGQVGGCAIDVYEGERNLFYKDLSNEVIKDSTFQRLVNFPNVLVTSHQAFFTTEALCSIAHTTLKSASDFYTNSLDESVIANK</sequence>
<keyword id="KW-0963">Cytoplasm</keyword>
<keyword id="KW-0520">NAD</keyword>
<keyword id="KW-0539">Nucleus</keyword>
<keyword id="KW-0560">Oxidoreductase</keyword>
<keyword id="KW-1185">Reference proteome</keyword>
<reference key="1">
    <citation type="journal article" date="2002" name="Nature">
        <title>The genome sequence of Schizosaccharomyces pombe.</title>
        <authorList>
            <person name="Wood V."/>
            <person name="Gwilliam R."/>
            <person name="Rajandream M.A."/>
            <person name="Lyne M.H."/>
            <person name="Lyne R."/>
            <person name="Stewart A."/>
            <person name="Sgouros J.G."/>
            <person name="Peat N."/>
            <person name="Hayles J."/>
            <person name="Baker S.G."/>
            <person name="Basham D."/>
            <person name="Bowman S."/>
            <person name="Brooks K."/>
            <person name="Brown D."/>
            <person name="Brown S."/>
            <person name="Chillingworth T."/>
            <person name="Churcher C.M."/>
            <person name="Collins M."/>
            <person name="Connor R."/>
            <person name="Cronin A."/>
            <person name="Davis P."/>
            <person name="Feltwell T."/>
            <person name="Fraser A."/>
            <person name="Gentles S."/>
            <person name="Goble A."/>
            <person name="Hamlin N."/>
            <person name="Harris D.E."/>
            <person name="Hidalgo J."/>
            <person name="Hodgson G."/>
            <person name="Holroyd S."/>
            <person name="Hornsby T."/>
            <person name="Howarth S."/>
            <person name="Huckle E.J."/>
            <person name="Hunt S."/>
            <person name="Jagels K."/>
            <person name="James K.D."/>
            <person name="Jones L."/>
            <person name="Jones M."/>
            <person name="Leather S."/>
            <person name="McDonald S."/>
            <person name="McLean J."/>
            <person name="Mooney P."/>
            <person name="Moule S."/>
            <person name="Mungall K.L."/>
            <person name="Murphy L.D."/>
            <person name="Niblett D."/>
            <person name="Odell C."/>
            <person name="Oliver K."/>
            <person name="O'Neil S."/>
            <person name="Pearson D."/>
            <person name="Quail M.A."/>
            <person name="Rabbinowitsch E."/>
            <person name="Rutherford K.M."/>
            <person name="Rutter S."/>
            <person name="Saunders D."/>
            <person name="Seeger K."/>
            <person name="Sharp S."/>
            <person name="Skelton J."/>
            <person name="Simmonds M.N."/>
            <person name="Squares R."/>
            <person name="Squares S."/>
            <person name="Stevens K."/>
            <person name="Taylor K."/>
            <person name="Taylor R.G."/>
            <person name="Tivey A."/>
            <person name="Walsh S.V."/>
            <person name="Warren T."/>
            <person name="Whitehead S."/>
            <person name="Woodward J.R."/>
            <person name="Volckaert G."/>
            <person name="Aert R."/>
            <person name="Robben J."/>
            <person name="Grymonprez B."/>
            <person name="Weltjens I."/>
            <person name="Vanstreels E."/>
            <person name="Rieger M."/>
            <person name="Schaefer M."/>
            <person name="Mueller-Auer S."/>
            <person name="Gabel C."/>
            <person name="Fuchs M."/>
            <person name="Duesterhoeft A."/>
            <person name="Fritzc C."/>
            <person name="Holzer E."/>
            <person name="Moestl D."/>
            <person name="Hilbert H."/>
            <person name="Borzym K."/>
            <person name="Langer I."/>
            <person name="Beck A."/>
            <person name="Lehrach H."/>
            <person name="Reinhardt R."/>
            <person name="Pohl T.M."/>
            <person name="Eger P."/>
            <person name="Zimmermann W."/>
            <person name="Wedler H."/>
            <person name="Wambutt R."/>
            <person name="Purnelle B."/>
            <person name="Goffeau A."/>
            <person name="Cadieu E."/>
            <person name="Dreano S."/>
            <person name="Gloux S."/>
            <person name="Lelaure V."/>
            <person name="Mottier S."/>
            <person name="Galibert F."/>
            <person name="Aves S.J."/>
            <person name="Xiang Z."/>
            <person name="Hunt C."/>
            <person name="Moore K."/>
            <person name="Hurst S.M."/>
            <person name="Lucas M."/>
            <person name="Rochet M."/>
            <person name="Gaillardin C."/>
            <person name="Tallada V.A."/>
            <person name="Garzon A."/>
            <person name="Thode G."/>
            <person name="Daga R.R."/>
            <person name="Cruzado L."/>
            <person name="Jimenez J."/>
            <person name="Sanchez M."/>
            <person name="del Rey F."/>
            <person name="Benito J."/>
            <person name="Dominguez A."/>
            <person name="Revuelta J.L."/>
            <person name="Moreno S."/>
            <person name="Armstrong J."/>
            <person name="Forsburg S.L."/>
            <person name="Cerutti L."/>
            <person name="Lowe T."/>
            <person name="McCombie W.R."/>
            <person name="Paulsen I."/>
            <person name="Potashkin J."/>
            <person name="Shpakovski G.V."/>
            <person name="Ussery D."/>
            <person name="Barrell B.G."/>
            <person name="Nurse P."/>
        </authorList>
    </citation>
    <scope>NUCLEOTIDE SEQUENCE [LARGE SCALE GENOMIC DNA]</scope>
    <source>
        <strain>972 / ATCC 24843</strain>
    </source>
</reference>
<name>DDH2_SCHPO</name>
<comment type="subcellular location">
    <subcellularLocation>
        <location>Cytoplasm</location>
    </subcellularLocation>
    <subcellularLocation>
        <location>Nucleus</location>
    </subcellularLocation>
</comment>
<comment type="similarity">
    <text evidence="2">Belongs to the D-isomer specific 2-hydroxyacid dehydrogenase family.</text>
</comment>
<accession>Q9P7Q1</accession>
<gene>
    <name type="ORF">SPAC186.02c</name>
</gene>
<proteinExistence type="inferred from homology"/>
<protein>
    <recommendedName>
        <fullName>2-hydroxyacid dehydrogenase homolog 2</fullName>
        <ecNumber>1.1.1.-</ecNumber>
    </recommendedName>
</protein>